<reference key="1">
    <citation type="journal article" date="2008" name="PLoS ONE">
        <title>A recalibrated molecular clock and independent origins for the cholera pandemic clones.</title>
        <authorList>
            <person name="Feng L."/>
            <person name="Reeves P.R."/>
            <person name="Lan R."/>
            <person name="Ren Y."/>
            <person name="Gao C."/>
            <person name="Zhou Z."/>
            <person name="Ren Y."/>
            <person name="Cheng J."/>
            <person name="Wang W."/>
            <person name="Wang J."/>
            <person name="Qian W."/>
            <person name="Li D."/>
            <person name="Wang L."/>
        </authorList>
    </citation>
    <scope>NUCLEOTIDE SEQUENCE [LARGE SCALE GENOMIC DNA]</scope>
    <source>
        <strain>M66-2</strain>
    </source>
</reference>
<accession>C3LQ20</accession>
<proteinExistence type="inferred from homology"/>
<organism>
    <name type="scientific">Vibrio cholerae serotype O1 (strain M66-2)</name>
    <dbReference type="NCBI Taxonomy" id="579112"/>
    <lineage>
        <taxon>Bacteria</taxon>
        <taxon>Pseudomonadati</taxon>
        <taxon>Pseudomonadota</taxon>
        <taxon>Gammaproteobacteria</taxon>
        <taxon>Vibrionales</taxon>
        <taxon>Vibrionaceae</taxon>
        <taxon>Vibrio</taxon>
    </lineage>
</organism>
<keyword id="KW-0012">Acyltransferase</keyword>
<keyword id="KW-0963">Cytoplasm</keyword>
<keyword id="KW-0441">Lipid A biosynthesis</keyword>
<keyword id="KW-0444">Lipid biosynthesis</keyword>
<keyword id="KW-0443">Lipid metabolism</keyword>
<keyword id="KW-0677">Repeat</keyword>
<keyword id="KW-0808">Transferase</keyword>
<gene>
    <name evidence="1" type="primary">lpxA</name>
    <name type="ordered locus">VCM66_2171</name>
</gene>
<feature type="chain" id="PRO_1000134390" description="Acyl-[acyl-carrier-protein]--UDP-N-acetylglucosamine O-acyltransferase">
    <location>
        <begin position="1"/>
        <end position="262"/>
    </location>
</feature>
<name>LPXA_VIBCM</name>
<protein>
    <recommendedName>
        <fullName evidence="1">Acyl-[acyl-carrier-protein]--UDP-N-acetylglucosamine O-acyltransferase</fullName>
        <shortName evidence="1">UDP-N-acetylglucosamine acyltransferase</shortName>
        <ecNumber evidence="1">2.3.1.129</ecNumber>
    </recommendedName>
</protein>
<dbReference type="EC" id="2.3.1.129" evidence="1"/>
<dbReference type="EMBL" id="CP001233">
    <property type="protein sequence ID" value="ACP06472.1"/>
    <property type="molecule type" value="Genomic_DNA"/>
</dbReference>
<dbReference type="RefSeq" id="WP_000581103.1">
    <property type="nucleotide sequence ID" value="NC_012578.1"/>
</dbReference>
<dbReference type="SMR" id="C3LQ20"/>
<dbReference type="GeneID" id="89513757"/>
<dbReference type="KEGG" id="vcm:VCM66_2171"/>
<dbReference type="HOGENOM" id="CLU_061249_0_1_6"/>
<dbReference type="UniPathway" id="UPA00359">
    <property type="reaction ID" value="UER00477"/>
</dbReference>
<dbReference type="Proteomes" id="UP000001217">
    <property type="component" value="Chromosome I"/>
</dbReference>
<dbReference type="GO" id="GO:0005737">
    <property type="term" value="C:cytoplasm"/>
    <property type="evidence" value="ECO:0007669"/>
    <property type="project" value="UniProtKB-SubCell"/>
</dbReference>
<dbReference type="GO" id="GO:0016020">
    <property type="term" value="C:membrane"/>
    <property type="evidence" value="ECO:0007669"/>
    <property type="project" value="GOC"/>
</dbReference>
<dbReference type="GO" id="GO:0008780">
    <property type="term" value="F:acyl-[acyl-carrier-protein]-UDP-N-acetylglucosamine O-acyltransferase activity"/>
    <property type="evidence" value="ECO:0007669"/>
    <property type="project" value="UniProtKB-UniRule"/>
</dbReference>
<dbReference type="GO" id="GO:0009245">
    <property type="term" value="P:lipid A biosynthetic process"/>
    <property type="evidence" value="ECO:0007669"/>
    <property type="project" value="UniProtKB-UniRule"/>
</dbReference>
<dbReference type="CDD" id="cd03351">
    <property type="entry name" value="LbH_UDP-GlcNAc_AT"/>
    <property type="match status" value="1"/>
</dbReference>
<dbReference type="FunFam" id="2.160.10.10:FF:000003">
    <property type="entry name" value="Acyl-[acyl-carrier-protein]--UDP-N-acetylglucosamine O-acyltransferase"/>
    <property type="match status" value="1"/>
</dbReference>
<dbReference type="Gene3D" id="2.160.10.10">
    <property type="entry name" value="Hexapeptide repeat proteins"/>
    <property type="match status" value="1"/>
</dbReference>
<dbReference type="Gene3D" id="1.20.1180.10">
    <property type="entry name" value="Udp N-acetylglucosamine O-acyltransferase, C-terminal domain"/>
    <property type="match status" value="1"/>
</dbReference>
<dbReference type="HAMAP" id="MF_00387">
    <property type="entry name" value="LpxA"/>
    <property type="match status" value="1"/>
</dbReference>
<dbReference type="InterPro" id="IPR029098">
    <property type="entry name" value="Acetyltransf_C"/>
</dbReference>
<dbReference type="InterPro" id="IPR037157">
    <property type="entry name" value="Acetyltransf_C_sf"/>
</dbReference>
<dbReference type="InterPro" id="IPR001451">
    <property type="entry name" value="Hexapep"/>
</dbReference>
<dbReference type="InterPro" id="IPR018357">
    <property type="entry name" value="Hexapep_transf_CS"/>
</dbReference>
<dbReference type="InterPro" id="IPR010137">
    <property type="entry name" value="Lipid_A_LpxA"/>
</dbReference>
<dbReference type="InterPro" id="IPR011004">
    <property type="entry name" value="Trimer_LpxA-like_sf"/>
</dbReference>
<dbReference type="NCBIfam" id="TIGR01852">
    <property type="entry name" value="lipid_A_lpxA"/>
    <property type="match status" value="1"/>
</dbReference>
<dbReference type="NCBIfam" id="NF003657">
    <property type="entry name" value="PRK05289.1"/>
    <property type="match status" value="1"/>
</dbReference>
<dbReference type="PANTHER" id="PTHR43480">
    <property type="entry name" value="ACYL-[ACYL-CARRIER-PROTEIN]--UDP-N-ACETYLGLUCOSAMINE O-ACYLTRANSFERASE"/>
    <property type="match status" value="1"/>
</dbReference>
<dbReference type="PANTHER" id="PTHR43480:SF1">
    <property type="entry name" value="ACYL-[ACYL-CARRIER-PROTEIN]--UDP-N-ACETYLGLUCOSAMINE O-ACYLTRANSFERASE, MITOCHONDRIAL-RELATED"/>
    <property type="match status" value="1"/>
</dbReference>
<dbReference type="Pfam" id="PF13720">
    <property type="entry name" value="Acetyltransf_11"/>
    <property type="match status" value="1"/>
</dbReference>
<dbReference type="Pfam" id="PF00132">
    <property type="entry name" value="Hexapep"/>
    <property type="match status" value="2"/>
</dbReference>
<dbReference type="PIRSF" id="PIRSF000456">
    <property type="entry name" value="UDP-GlcNAc_acltr"/>
    <property type="match status" value="1"/>
</dbReference>
<dbReference type="SUPFAM" id="SSF51161">
    <property type="entry name" value="Trimeric LpxA-like enzymes"/>
    <property type="match status" value="1"/>
</dbReference>
<dbReference type="PROSITE" id="PS00101">
    <property type="entry name" value="HEXAPEP_TRANSFERASES"/>
    <property type="match status" value="1"/>
</dbReference>
<sequence>MIHETAQIHPTSVVEEGAIIGANVKIGPFCFVDSKVEIGEGTELLSHVVVKGPTKIGRFNRIFQFASIGEACQDLKYAGEDTQLIIGDRNTIRESVTMHRGTVQDKGITIVGSDNLFMINAHVAHDCVIGDRCIFANNATLAGHVKVGNQAIVGGMSAIHQFCHIGDHCMLGGGSIVVQDVPPYVMAQGNHCAPFGINVEGLKRRGFDKAEIHAIRRAYKSLYRNGLTLEAAKAEIAQEAEQYPSVKLFLDFLEKSERGIIR</sequence>
<evidence type="ECO:0000255" key="1">
    <source>
        <dbReference type="HAMAP-Rule" id="MF_00387"/>
    </source>
</evidence>
<comment type="function">
    <text evidence="1">Involved in the biosynthesis of lipid A, a phosphorylated glycolipid that anchors the lipopolysaccharide to the outer membrane of the cell.</text>
</comment>
<comment type="catalytic activity">
    <reaction evidence="1">
        <text>a (3R)-hydroxyacyl-[ACP] + UDP-N-acetyl-alpha-D-glucosamine = a UDP-3-O-[(3R)-3-hydroxyacyl]-N-acetyl-alpha-D-glucosamine + holo-[ACP]</text>
        <dbReference type="Rhea" id="RHEA:67812"/>
        <dbReference type="Rhea" id="RHEA-COMP:9685"/>
        <dbReference type="Rhea" id="RHEA-COMP:9945"/>
        <dbReference type="ChEBI" id="CHEBI:57705"/>
        <dbReference type="ChEBI" id="CHEBI:64479"/>
        <dbReference type="ChEBI" id="CHEBI:78827"/>
        <dbReference type="ChEBI" id="CHEBI:173225"/>
        <dbReference type="EC" id="2.3.1.129"/>
    </reaction>
</comment>
<comment type="pathway">
    <text evidence="1">Glycolipid biosynthesis; lipid IV(A) biosynthesis; lipid IV(A) from (3R)-3-hydroxytetradecanoyl-[acyl-carrier-protein] and UDP-N-acetyl-alpha-D-glucosamine: step 1/6.</text>
</comment>
<comment type="subunit">
    <text evidence="1">Homotrimer.</text>
</comment>
<comment type="subcellular location">
    <subcellularLocation>
        <location evidence="1">Cytoplasm</location>
    </subcellularLocation>
</comment>
<comment type="similarity">
    <text evidence="1">Belongs to the transferase hexapeptide repeat family. LpxA subfamily.</text>
</comment>